<protein>
    <recommendedName>
        <fullName evidence="1">Methionine--tRNA ligase</fullName>
        <ecNumber evidence="1">6.1.1.10</ecNumber>
    </recommendedName>
    <alternativeName>
        <fullName evidence="1">Methionyl-tRNA synthetase</fullName>
        <shortName evidence="1">MetRS</shortName>
    </alternativeName>
</protein>
<reference key="1">
    <citation type="journal article" date="2009" name="Science">
        <title>The dynamics and time scale of ongoing genomic erosion in symbiotic bacteria.</title>
        <authorList>
            <person name="Moran N.A."/>
            <person name="McLaughlin H.J."/>
            <person name="Sorek R."/>
        </authorList>
    </citation>
    <scope>NUCLEOTIDE SEQUENCE [LARGE SCALE GENOMIC DNA]</scope>
    <source>
        <strain>Tuc7</strain>
    </source>
</reference>
<keyword id="KW-0030">Aminoacyl-tRNA synthetase</keyword>
<keyword id="KW-0067">ATP-binding</keyword>
<keyword id="KW-0963">Cytoplasm</keyword>
<keyword id="KW-0436">Ligase</keyword>
<keyword id="KW-0479">Metal-binding</keyword>
<keyword id="KW-0547">Nucleotide-binding</keyword>
<keyword id="KW-0648">Protein biosynthesis</keyword>
<keyword id="KW-0862">Zinc</keyword>
<dbReference type="EC" id="6.1.1.10" evidence="1"/>
<dbReference type="EMBL" id="CP001158">
    <property type="protein sequence ID" value="ACL29930.1"/>
    <property type="molecule type" value="Genomic_DNA"/>
</dbReference>
<dbReference type="RefSeq" id="WP_009874064.1">
    <property type="nucleotide sequence ID" value="NC_011834.1"/>
</dbReference>
<dbReference type="SMR" id="B8D715"/>
<dbReference type="KEGG" id="bau:BUAPTUC7_108"/>
<dbReference type="HOGENOM" id="CLU_009710_7_0_6"/>
<dbReference type="GO" id="GO:0005829">
    <property type="term" value="C:cytosol"/>
    <property type="evidence" value="ECO:0007669"/>
    <property type="project" value="TreeGrafter"/>
</dbReference>
<dbReference type="GO" id="GO:0005524">
    <property type="term" value="F:ATP binding"/>
    <property type="evidence" value="ECO:0007669"/>
    <property type="project" value="UniProtKB-UniRule"/>
</dbReference>
<dbReference type="GO" id="GO:0046872">
    <property type="term" value="F:metal ion binding"/>
    <property type="evidence" value="ECO:0007669"/>
    <property type="project" value="UniProtKB-KW"/>
</dbReference>
<dbReference type="GO" id="GO:0004825">
    <property type="term" value="F:methionine-tRNA ligase activity"/>
    <property type="evidence" value="ECO:0007669"/>
    <property type="project" value="UniProtKB-UniRule"/>
</dbReference>
<dbReference type="GO" id="GO:0006431">
    <property type="term" value="P:methionyl-tRNA aminoacylation"/>
    <property type="evidence" value="ECO:0007669"/>
    <property type="project" value="UniProtKB-UniRule"/>
</dbReference>
<dbReference type="CDD" id="cd07957">
    <property type="entry name" value="Anticodon_Ia_Met"/>
    <property type="match status" value="1"/>
</dbReference>
<dbReference type="FunFam" id="1.10.730.10:FF:000005">
    <property type="entry name" value="Methionine--tRNA ligase"/>
    <property type="match status" value="1"/>
</dbReference>
<dbReference type="FunFam" id="2.20.28.20:FF:000001">
    <property type="entry name" value="Methionine--tRNA ligase"/>
    <property type="match status" value="1"/>
</dbReference>
<dbReference type="Gene3D" id="3.40.50.620">
    <property type="entry name" value="HUPs"/>
    <property type="match status" value="1"/>
</dbReference>
<dbReference type="Gene3D" id="1.10.730.10">
    <property type="entry name" value="Isoleucyl-tRNA Synthetase, Domain 1"/>
    <property type="match status" value="1"/>
</dbReference>
<dbReference type="Gene3D" id="2.20.28.20">
    <property type="entry name" value="Methionyl-tRNA synthetase, Zn-domain"/>
    <property type="match status" value="1"/>
</dbReference>
<dbReference type="HAMAP" id="MF_00098">
    <property type="entry name" value="Met_tRNA_synth_type1"/>
    <property type="match status" value="1"/>
</dbReference>
<dbReference type="InterPro" id="IPR001412">
    <property type="entry name" value="aa-tRNA-synth_I_CS"/>
</dbReference>
<dbReference type="InterPro" id="IPR041872">
    <property type="entry name" value="Anticodon_Met"/>
</dbReference>
<dbReference type="InterPro" id="IPR023458">
    <property type="entry name" value="Met-tRNA_ligase_1"/>
</dbReference>
<dbReference type="InterPro" id="IPR014758">
    <property type="entry name" value="Met-tRNA_synth"/>
</dbReference>
<dbReference type="InterPro" id="IPR015413">
    <property type="entry name" value="Methionyl/Leucyl_tRNA_Synth"/>
</dbReference>
<dbReference type="InterPro" id="IPR033911">
    <property type="entry name" value="MetRS_core"/>
</dbReference>
<dbReference type="InterPro" id="IPR029038">
    <property type="entry name" value="MetRS_Zn"/>
</dbReference>
<dbReference type="InterPro" id="IPR014729">
    <property type="entry name" value="Rossmann-like_a/b/a_fold"/>
</dbReference>
<dbReference type="InterPro" id="IPR009080">
    <property type="entry name" value="tRNAsynth_Ia_anticodon-bd"/>
</dbReference>
<dbReference type="NCBIfam" id="TIGR00398">
    <property type="entry name" value="metG"/>
    <property type="match status" value="1"/>
</dbReference>
<dbReference type="NCBIfam" id="NF001100">
    <property type="entry name" value="PRK00133.1"/>
    <property type="match status" value="1"/>
</dbReference>
<dbReference type="PANTHER" id="PTHR45765">
    <property type="entry name" value="METHIONINE--TRNA LIGASE"/>
    <property type="match status" value="1"/>
</dbReference>
<dbReference type="PANTHER" id="PTHR45765:SF1">
    <property type="entry name" value="METHIONINE--TRNA LIGASE, CYTOPLASMIC"/>
    <property type="match status" value="1"/>
</dbReference>
<dbReference type="Pfam" id="PF09334">
    <property type="entry name" value="tRNA-synt_1g"/>
    <property type="match status" value="1"/>
</dbReference>
<dbReference type="PRINTS" id="PR01041">
    <property type="entry name" value="TRNASYNTHMET"/>
</dbReference>
<dbReference type="SUPFAM" id="SSF47323">
    <property type="entry name" value="Anticodon-binding domain of a subclass of class I aminoacyl-tRNA synthetases"/>
    <property type="match status" value="1"/>
</dbReference>
<dbReference type="SUPFAM" id="SSF57770">
    <property type="entry name" value="Methionyl-tRNA synthetase (MetRS), Zn-domain"/>
    <property type="match status" value="1"/>
</dbReference>
<dbReference type="SUPFAM" id="SSF52374">
    <property type="entry name" value="Nucleotidylyl transferase"/>
    <property type="match status" value="1"/>
</dbReference>
<dbReference type="PROSITE" id="PS00178">
    <property type="entry name" value="AA_TRNA_LIGASE_I"/>
    <property type="match status" value="1"/>
</dbReference>
<proteinExistence type="inferred from homology"/>
<organism>
    <name type="scientific">Buchnera aphidicola subsp. Acyrthosiphon pisum (strain Tuc7)</name>
    <dbReference type="NCBI Taxonomy" id="561501"/>
    <lineage>
        <taxon>Bacteria</taxon>
        <taxon>Pseudomonadati</taxon>
        <taxon>Pseudomonadota</taxon>
        <taxon>Gammaproteobacteria</taxon>
        <taxon>Enterobacterales</taxon>
        <taxon>Erwiniaceae</taxon>
        <taxon>Buchnera</taxon>
    </lineage>
</organism>
<sequence length="547" mass="64283">MSSVFRKILVTCALPYANGSIHIGHMLEHIQADIWVRYHRMRGHEVWFVSADDAHGTAIMLKAQDLEISPNKLIKNIRIEHQIDFSNFKISHDNYYSTHSLENLYLSRKIFTCLNEKGLIKEKKIFQLYDTVKKIFLPDRFIKGTCPICKSKNQYGDNCEICSATYEPTDLINPISVISGKKPILKNTKHLYFDLPSFTNMLKKWIHSGVLEESVIKKTEEWFKVGLKSWAISRDAPYFGFKIPNYPNKYFYVWLDAPIGYISAFKNLCFKSKKLNFNELWNQNSNYELYHFIGKDIIYFHTLFWPAILEAVSFRQPSGIFVHGHLTMNGLKLSKSRGALIKASDWIQYFDSDSLRYYYASKLSNKTHDIEINLEDFIQKINSDIVNKLVNLAARNASFINKYFNGYLSDKLSNIKLYKYFVNTSSSIEDFFENREFSFIVKESMRLLDVANQYINEKKPWKIKRTEENIRELQNICTMGINLFRIIMIFLKPIVPDLAIKTESFLISKLTWDGIKKPLLSHQINKFFPLYKRIDVEKMFEFMNICR</sequence>
<evidence type="ECO:0000255" key="1">
    <source>
        <dbReference type="HAMAP-Rule" id="MF_00098"/>
    </source>
</evidence>
<comment type="function">
    <text evidence="1">Is required not only for elongation of protein synthesis but also for the initiation of all mRNA translation through initiator tRNA(fMet) aminoacylation.</text>
</comment>
<comment type="catalytic activity">
    <reaction evidence="1">
        <text>tRNA(Met) + L-methionine + ATP = L-methionyl-tRNA(Met) + AMP + diphosphate</text>
        <dbReference type="Rhea" id="RHEA:13481"/>
        <dbReference type="Rhea" id="RHEA-COMP:9667"/>
        <dbReference type="Rhea" id="RHEA-COMP:9698"/>
        <dbReference type="ChEBI" id="CHEBI:30616"/>
        <dbReference type="ChEBI" id="CHEBI:33019"/>
        <dbReference type="ChEBI" id="CHEBI:57844"/>
        <dbReference type="ChEBI" id="CHEBI:78442"/>
        <dbReference type="ChEBI" id="CHEBI:78530"/>
        <dbReference type="ChEBI" id="CHEBI:456215"/>
        <dbReference type="EC" id="6.1.1.10"/>
    </reaction>
</comment>
<comment type="cofactor">
    <cofactor evidence="1">
        <name>Zn(2+)</name>
        <dbReference type="ChEBI" id="CHEBI:29105"/>
    </cofactor>
    <text evidence="1">Binds 1 zinc ion per subunit.</text>
</comment>
<comment type="subunit">
    <text evidence="1">Monomer.</text>
</comment>
<comment type="subcellular location">
    <subcellularLocation>
        <location evidence="1">Cytoplasm</location>
    </subcellularLocation>
</comment>
<comment type="similarity">
    <text evidence="1">Belongs to the class-I aminoacyl-tRNA synthetase family. MetG type 1 subfamily.</text>
</comment>
<feature type="chain" id="PRO_1000199283" description="Methionine--tRNA ligase">
    <location>
        <begin position="1"/>
        <end position="547"/>
    </location>
</feature>
<feature type="short sequence motif" description="'HIGH' region">
    <location>
        <begin position="15"/>
        <end position="25"/>
    </location>
</feature>
<feature type="short sequence motif" description="'KMSKS' region">
    <location>
        <begin position="332"/>
        <end position="336"/>
    </location>
</feature>
<feature type="binding site" evidence="1">
    <location>
        <position position="146"/>
    </location>
    <ligand>
        <name>Zn(2+)</name>
        <dbReference type="ChEBI" id="CHEBI:29105"/>
    </ligand>
</feature>
<feature type="binding site" evidence="1">
    <location>
        <position position="149"/>
    </location>
    <ligand>
        <name>Zn(2+)</name>
        <dbReference type="ChEBI" id="CHEBI:29105"/>
    </ligand>
</feature>
<feature type="binding site" evidence="1">
    <location>
        <position position="159"/>
    </location>
    <ligand>
        <name>Zn(2+)</name>
        <dbReference type="ChEBI" id="CHEBI:29105"/>
    </ligand>
</feature>
<feature type="binding site" evidence="1">
    <location>
        <position position="162"/>
    </location>
    <ligand>
        <name>Zn(2+)</name>
        <dbReference type="ChEBI" id="CHEBI:29105"/>
    </ligand>
</feature>
<feature type="binding site" evidence="1">
    <location>
        <position position="335"/>
    </location>
    <ligand>
        <name>ATP</name>
        <dbReference type="ChEBI" id="CHEBI:30616"/>
    </ligand>
</feature>
<accession>B8D715</accession>
<gene>
    <name evidence="1" type="primary">metG</name>
    <name type="ordered locus">BUAPTUC7_108</name>
</gene>
<name>SYM_BUCAT</name>